<proteinExistence type="inferred from homology"/>
<feature type="chain" id="PRO_0000110789" description="Orotate phosphoribosyltransferase">
    <location>
        <begin position="1"/>
        <end position="197"/>
    </location>
</feature>
<feature type="binding site" evidence="1">
    <location>
        <position position="87"/>
    </location>
    <ligand>
        <name>5-phospho-alpha-D-ribose 1-diphosphate</name>
        <dbReference type="ChEBI" id="CHEBI:58017"/>
        <note>ligand shared between dimeric partners</note>
    </ligand>
</feature>
<feature type="binding site" evidence="1">
    <location>
        <position position="91"/>
    </location>
    <ligand>
        <name>5-phospho-alpha-D-ribose 1-diphosphate</name>
        <dbReference type="ChEBI" id="CHEBI:58017"/>
        <note>ligand shared between dimeric partners</note>
    </ligand>
</feature>
<feature type="binding site" evidence="1">
    <location>
        <position position="93"/>
    </location>
    <ligand>
        <name>5-phospho-alpha-D-ribose 1-diphosphate</name>
        <dbReference type="ChEBI" id="CHEBI:58017"/>
        <note>ligand shared between dimeric partners</note>
    </ligand>
</feature>
<feature type="binding site" description="in other chain" evidence="1">
    <location>
        <begin position="112"/>
        <end position="120"/>
    </location>
    <ligand>
        <name>5-phospho-alpha-D-ribose 1-diphosphate</name>
        <dbReference type="ChEBI" id="CHEBI:58017"/>
        <note>ligand shared between dimeric partners</note>
    </ligand>
</feature>
<feature type="binding site" evidence="1">
    <location>
        <position position="116"/>
    </location>
    <ligand>
        <name>orotate</name>
        <dbReference type="ChEBI" id="CHEBI:30839"/>
    </ligand>
</feature>
<feature type="binding site" evidence="1">
    <location>
        <position position="144"/>
    </location>
    <ligand>
        <name>orotate</name>
        <dbReference type="ChEBI" id="CHEBI:30839"/>
    </ligand>
</feature>
<gene>
    <name evidence="1" type="primary">pyrE</name>
    <name type="ordered locus">Saci_1597</name>
</gene>
<dbReference type="EC" id="2.4.2.10" evidence="1"/>
<dbReference type="EMBL" id="Y12822">
    <property type="protein sequence ID" value="CAA73352.1"/>
    <property type="molecule type" value="Genomic_DNA"/>
</dbReference>
<dbReference type="EMBL" id="AJ459777">
    <property type="protein sequence ID" value="CAD31975.1"/>
    <property type="molecule type" value="Genomic_DNA"/>
</dbReference>
<dbReference type="EMBL" id="CP000077">
    <property type="protein sequence ID" value="AAY80910.1"/>
    <property type="molecule type" value="Genomic_DNA"/>
</dbReference>
<dbReference type="RefSeq" id="WP_011278412.1">
    <property type="nucleotide sequence ID" value="NC_007181.1"/>
</dbReference>
<dbReference type="SMR" id="O08359"/>
<dbReference type="STRING" id="330779.Saci_1597"/>
<dbReference type="GeneID" id="14552090"/>
<dbReference type="GeneID" id="3474280"/>
<dbReference type="KEGG" id="sai:Saci_1597"/>
<dbReference type="PATRIC" id="fig|330779.12.peg.1537"/>
<dbReference type="eggNOG" id="arCOG00029">
    <property type="taxonomic scope" value="Archaea"/>
</dbReference>
<dbReference type="HOGENOM" id="CLU_074878_2_0_2"/>
<dbReference type="UniPathway" id="UPA00070">
    <property type="reaction ID" value="UER00119"/>
</dbReference>
<dbReference type="Proteomes" id="UP000001018">
    <property type="component" value="Chromosome"/>
</dbReference>
<dbReference type="GO" id="GO:0000287">
    <property type="term" value="F:magnesium ion binding"/>
    <property type="evidence" value="ECO:0007669"/>
    <property type="project" value="UniProtKB-UniRule"/>
</dbReference>
<dbReference type="GO" id="GO:0004588">
    <property type="term" value="F:orotate phosphoribosyltransferase activity"/>
    <property type="evidence" value="ECO:0007669"/>
    <property type="project" value="UniProtKB-UniRule"/>
</dbReference>
<dbReference type="GO" id="GO:0044205">
    <property type="term" value="P:'de novo' UMP biosynthetic process"/>
    <property type="evidence" value="ECO:0007669"/>
    <property type="project" value="UniProtKB-UniRule"/>
</dbReference>
<dbReference type="GO" id="GO:0019856">
    <property type="term" value="P:pyrimidine nucleobase biosynthetic process"/>
    <property type="evidence" value="ECO:0007669"/>
    <property type="project" value="TreeGrafter"/>
</dbReference>
<dbReference type="CDD" id="cd06223">
    <property type="entry name" value="PRTases_typeI"/>
    <property type="match status" value="1"/>
</dbReference>
<dbReference type="Gene3D" id="3.40.50.2020">
    <property type="match status" value="1"/>
</dbReference>
<dbReference type="HAMAP" id="MF_01208">
    <property type="entry name" value="PyrE"/>
    <property type="match status" value="1"/>
</dbReference>
<dbReference type="InterPro" id="IPR023031">
    <property type="entry name" value="OPRT"/>
</dbReference>
<dbReference type="InterPro" id="IPR004467">
    <property type="entry name" value="Or_phspho_trans_dom"/>
</dbReference>
<dbReference type="InterPro" id="IPR000836">
    <property type="entry name" value="PRibTrfase_dom"/>
</dbReference>
<dbReference type="InterPro" id="IPR029057">
    <property type="entry name" value="PRTase-like"/>
</dbReference>
<dbReference type="NCBIfam" id="TIGR00336">
    <property type="entry name" value="pyrE"/>
    <property type="match status" value="1"/>
</dbReference>
<dbReference type="PANTHER" id="PTHR19278">
    <property type="entry name" value="OROTATE PHOSPHORIBOSYLTRANSFERASE"/>
    <property type="match status" value="1"/>
</dbReference>
<dbReference type="PANTHER" id="PTHR19278:SF9">
    <property type="entry name" value="URIDINE 5'-MONOPHOSPHATE SYNTHASE"/>
    <property type="match status" value="1"/>
</dbReference>
<dbReference type="Pfam" id="PF00156">
    <property type="entry name" value="Pribosyltran"/>
    <property type="match status" value="1"/>
</dbReference>
<dbReference type="SUPFAM" id="SSF53271">
    <property type="entry name" value="PRTase-like"/>
    <property type="match status" value="1"/>
</dbReference>
<name>PYRE_SULAC</name>
<sequence>MDFVKALLDKKLLLIGNFMLTSGKVSPYYLDLRKLPNHPDIFSFVVSSAVDIVKGINFDMILGVVTGGVPFASFIACKLNKPMGYIRAEKKGHGTERLLEADVDGKKVIVVDDVATTGGSILKAVEEVRKAGGKVEHALVIVDREEGAFEKLESVGIRLLSVYKVSEILNSLIKSNLVAENEKKLISDYMVKNIGKS</sequence>
<organism>
    <name type="scientific">Sulfolobus acidocaldarius (strain ATCC 33909 / DSM 639 / JCM 8929 / NBRC 15157 / NCIMB 11770)</name>
    <dbReference type="NCBI Taxonomy" id="330779"/>
    <lineage>
        <taxon>Archaea</taxon>
        <taxon>Thermoproteota</taxon>
        <taxon>Thermoprotei</taxon>
        <taxon>Sulfolobales</taxon>
        <taxon>Sulfolobaceae</taxon>
        <taxon>Sulfolobus</taxon>
    </lineage>
</organism>
<protein>
    <recommendedName>
        <fullName evidence="1">Orotate phosphoribosyltransferase</fullName>
        <shortName evidence="1">OPRT</shortName>
        <shortName evidence="1">OPRTase</shortName>
        <ecNumber evidence="1">2.4.2.10</ecNumber>
    </recommendedName>
</protein>
<evidence type="ECO:0000255" key="1">
    <source>
        <dbReference type="HAMAP-Rule" id="MF_01208"/>
    </source>
</evidence>
<reference key="1">
    <citation type="submission" date="1997-04" db="EMBL/GenBank/DDBJ databases">
        <authorList>
            <person name="Charlier D.R.M."/>
            <person name="Thia-Toong T.-L."/>
            <person name="Roovers M."/>
            <person name="Durbecq V."/>
            <person name="Legrain C."/>
            <person name="Glansdorff N."/>
        </authorList>
    </citation>
    <scope>NUCLEOTIDE SEQUENCE [GENOMIC DNA]</scope>
    <source>
        <strain>ATCC 33909 / DSM 639 / JCM 8929 / NBRC 15157 / NCIMB 11770</strain>
    </source>
</reference>
<reference key="2">
    <citation type="journal article" date="2002" name="J. Bacteriol.">
        <title>Genes of de novo pyrimidine biosynthesis from the hyperthermoacidophilic crenarchaeote Sulfolobus acidocaldarius: novel organization in a bipolar operon.</title>
        <authorList>
            <person name="Thia-Toong T.-L."/>
            <person name="Roovers M."/>
            <person name="Durbecq V."/>
            <person name="Gigot D."/>
            <person name="Glansdorff N."/>
            <person name="Charlier D.R.M."/>
        </authorList>
    </citation>
    <scope>NUCLEOTIDE SEQUENCE [GENOMIC DNA]</scope>
    <source>
        <strain>ATCC 33909 / DSM 639 / JCM 8929 / NBRC 15157 / NCIMB 11770</strain>
    </source>
</reference>
<reference key="3">
    <citation type="journal article" date="2005" name="J. Bacteriol.">
        <title>The genome of Sulfolobus acidocaldarius, a model organism of the Crenarchaeota.</title>
        <authorList>
            <person name="Chen L."/>
            <person name="Bruegger K."/>
            <person name="Skovgaard M."/>
            <person name="Redder P."/>
            <person name="She Q."/>
            <person name="Torarinsson E."/>
            <person name="Greve B."/>
            <person name="Awayez M."/>
            <person name="Zibat A."/>
            <person name="Klenk H.-P."/>
            <person name="Garrett R.A."/>
        </authorList>
    </citation>
    <scope>NUCLEOTIDE SEQUENCE [LARGE SCALE GENOMIC DNA]</scope>
    <source>
        <strain>ATCC 33909 / DSM 639 / JCM 8929 / NBRC 15157 / NCIMB 11770</strain>
    </source>
</reference>
<keyword id="KW-0328">Glycosyltransferase</keyword>
<keyword id="KW-0460">Magnesium</keyword>
<keyword id="KW-0665">Pyrimidine biosynthesis</keyword>
<keyword id="KW-1185">Reference proteome</keyword>
<keyword id="KW-0808">Transferase</keyword>
<comment type="function">
    <text evidence="1">Catalyzes the transfer of a ribosyl phosphate group from 5-phosphoribose 1-diphosphate to orotate, leading to the formation of orotidine monophosphate (OMP).</text>
</comment>
<comment type="catalytic activity">
    <reaction evidence="1">
        <text>orotidine 5'-phosphate + diphosphate = orotate + 5-phospho-alpha-D-ribose 1-diphosphate</text>
        <dbReference type="Rhea" id="RHEA:10380"/>
        <dbReference type="ChEBI" id="CHEBI:30839"/>
        <dbReference type="ChEBI" id="CHEBI:33019"/>
        <dbReference type="ChEBI" id="CHEBI:57538"/>
        <dbReference type="ChEBI" id="CHEBI:58017"/>
        <dbReference type="EC" id="2.4.2.10"/>
    </reaction>
</comment>
<comment type="cofactor">
    <cofactor evidence="1">
        <name>Mg(2+)</name>
        <dbReference type="ChEBI" id="CHEBI:18420"/>
    </cofactor>
</comment>
<comment type="pathway">
    <text evidence="1">Pyrimidine metabolism; UMP biosynthesis via de novo pathway; UMP from orotate: step 1/2.</text>
</comment>
<comment type="subunit">
    <text evidence="1">Homodimer.</text>
</comment>
<comment type="similarity">
    <text evidence="1">Belongs to the purine/pyrimidine phosphoribosyltransferase family. PyrE subfamily.</text>
</comment>
<accession>O08359</accession>
<accession>Q4J8H0</accession>